<protein>
    <recommendedName>
        <fullName evidence="6">Short chain dehydrogenase MYCFIDRAFT_6125</fullName>
        <ecNumber evidence="8">1.1.1.-</ecNumber>
    </recommendedName>
    <alternativeName>
        <fullName evidence="6">PKS8-1 gene cluster protein MYCFIDRAFT_6125</fullName>
    </alternativeName>
</protein>
<proteinExistence type="inferred from homology"/>
<organism>
    <name type="scientific">Pseudocercospora fijiensis (strain CIRAD86)</name>
    <name type="common">Black leaf streak disease fungus</name>
    <name type="synonym">Mycosphaerella fijiensis</name>
    <dbReference type="NCBI Taxonomy" id="383855"/>
    <lineage>
        <taxon>Eukaryota</taxon>
        <taxon>Fungi</taxon>
        <taxon>Dikarya</taxon>
        <taxon>Ascomycota</taxon>
        <taxon>Pezizomycotina</taxon>
        <taxon>Dothideomycetes</taxon>
        <taxon>Dothideomycetidae</taxon>
        <taxon>Mycosphaerellales</taxon>
        <taxon>Mycosphaerellaceae</taxon>
        <taxon>Pseudocercospora</taxon>
    </lineage>
</organism>
<keyword id="KW-0521">NADP</keyword>
<keyword id="KW-0560">Oxidoreductase</keyword>
<keyword id="KW-1185">Reference proteome</keyword>
<comment type="function">
    <text evidence="4 5 8">Short chain dehydrogenase; part of the gene cluster that mediates the biosynthesis of an emodin derivative that may be involved in black Sigatoka disease of banana (PubMed:27388157, PubMed:30735556). The pathway begins with the synthesis of atrochrysone thioester by the polyketide synthase PKS8-1 (Probable). The atrochrysone carboxyl ACP thioesterase MYCFIDRAFT_190111 then breaks the thioester bond and releases the atrochrysone carboxylic acid from PKS8-1 (Probable). The decarboxylase MYCFIDRAFT_34057 then catalyzes the concerted decarboxylation-elimination required to convert atochrysone carboxylic acid into emodin anthrone, which is further oxidized to emodin by the anthrone oxygenase MYCFIDRAFT_34418 (Probable). The functions of the other tailoring enzymes as well as the final product of the cluster have still to be identified (Probable).</text>
</comment>
<comment type="pathway">
    <text evidence="8">Secondary metabolite biosynthesis.</text>
</comment>
<comment type="similarity">
    <text evidence="7">Belongs to the short-chain dehydrogenases/reductases (SDR) family.</text>
</comment>
<comment type="sequence caution" evidence="7">
    <conflict type="erroneous initiation">
        <sequence resource="EMBL-CDS" id="EME79064"/>
    </conflict>
    <text>Extended N-terminus.</text>
</comment>
<comment type="sequence caution" evidence="7">
    <conflict type="erroneous termination">
        <sequence resource="EMBL-CDS" id="EME79064"/>
    </conflict>
    <text>Extended C-terminus.</text>
</comment>
<gene>
    <name type="ORF">MYCFIDRAFT_6125</name>
</gene>
<feature type="chain" id="PRO_0000451126" description="Short chain dehydrogenase MYCFIDRAFT_6125">
    <location>
        <begin position="1"/>
        <end position="309"/>
    </location>
</feature>
<feature type="active site" description="Proton donor" evidence="2">
    <location>
        <position position="168"/>
    </location>
</feature>
<feature type="active site" description="Proton acceptor" evidence="3">
    <location>
        <position position="182"/>
    </location>
</feature>
<feature type="active site" description="Lowers pKa of active site Tyr" evidence="2">
    <location>
        <position position="186"/>
    </location>
</feature>
<feature type="binding site" evidence="1">
    <location>
        <position position="43"/>
    </location>
    <ligand>
        <name>NADP(+)</name>
        <dbReference type="ChEBI" id="CHEBI:58349"/>
    </ligand>
</feature>
<feature type="binding site" evidence="1">
    <location>
        <position position="67"/>
    </location>
    <ligand>
        <name>NADP(+)</name>
        <dbReference type="ChEBI" id="CHEBI:58349"/>
    </ligand>
</feature>
<feature type="binding site" evidence="1">
    <location>
        <position position="88"/>
    </location>
    <ligand>
        <name>NADP(+)</name>
        <dbReference type="ChEBI" id="CHEBI:58349"/>
    </ligand>
</feature>
<feature type="binding site" evidence="1">
    <location>
        <position position="150"/>
    </location>
    <ligand>
        <name>NADP(+)</name>
        <dbReference type="ChEBI" id="CHEBI:58349"/>
    </ligand>
</feature>
<feature type="binding site" evidence="2">
    <location>
        <position position="182"/>
    </location>
    <ligand>
        <name>NADP(+)</name>
        <dbReference type="ChEBI" id="CHEBI:58349"/>
    </ligand>
</feature>
<feature type="binding site" evidence="2">
    <location>
        <position position="186"/>
    </location>
    <ligand>
        <name>NADP(+)</name>
        <dbReference type="ChEBI" id="CHEBI:58349"/>
    </ligand>
</feature>
<feature type="binding site" evidence="2">
    <location>
        <position position="215"/>
    </location>
    <ligand>
        <name>NADP(+)</name>
        <dbReference type="ChEBI" id="CHEBI:58349"/>
    </ligand>
</feature>
<feature type="binding site" evidence="1">
    <location>
        <position position="217"/>
    </location>
    <ligand>
        <name>NADP(+)</name>
        <dbReference type="ChEBI" id="CHEBI:58349"/>
    </ligand>
</feature>
<dbReference type="EC" id="1.1.1.-" evidence="8"/>
<dbReference type="EMBL" id="KB446562">
    <property type="protein sequence ID" value="EME79064.1"/>
    <property type="status" value="ALT_SEQ"/>
    <property type="molecule type" value="Genomic_DNA"/>
</dbReference>
<dbReference type="RefSeq" id="XP_007929584.1">
    <property type="nucleotide sequence ID" value="XM_007931393.1"/>
</dbReference>
<dbReference type="SMR" id="M2ZIX7"/>
<dbReference type="GeneID" id="19340661"/>
<dbReference type="KEGG" id="pfj:MYCFIDRAFT_6125"/>
<dbReference type="VEuPathDB" id="FungiDB:MYCFIDRAFT_6125"/>
<dbReference type="eggNOG" id="KOG1205">
    <property type="taxonomic scope" value="Eukaryota"/>
</dbReference>
<dbReference type="HOGENOM" id="CLU_010194_2_10_1"/>
<dbReference type="OrthoDB" id="1933717at2759"/>
<dbReference type="Proteomes" id="UP000016932">
    <property type="component" value="Unassembled WGS sequence"/>
</dbReference>
<dbReference type="GO" id="GO:0016020">
    <property type="term" value="C:membrane"/>
    <property type="evidence" value="ECO:0007669"/>
    <property type="project" value="TreeGrafter"/>
</dbReference>
<dbReference type="GO" id="GO:0016491">
    <property type="term" value="F:oxidoreductase activity"/>
    <property type="evidence" value="ECO:0007669"/>
    <property type="project" value="UniProtKB-KW"/>
</dbReference>
<dbReference type="CDD" id="cd05233">
    <property type="entry name" value="SDR_c"/>
    <property type="match status" value="1"/>
</dbReference>
<dbReference type="Gene3D" id="3.40.50.720">
    <property type="entry name" value="NAD(P)-binding Rossmann-like Domain"/>
    <property type="match status" value="1"/>
</dbReference>
<dbReference type="InterPro" id="IPR036291">
    <property type="entry name" value="NAD(P)-bd_dom_sf"/>
</dbReference>
<dbReference type="InterPro" id="IPR002347">
    <property type="entry name" value="SDR_fam"/>
</dbReference>
<dbReference type="PANTHER" id="PTHR44196">
    <property type="entry name" value="DEHYDROGENASE/REDUCTASE SDR FAMILY MEMBER 7B"/>
    <property type="match status" value="1"/>
</dbReference>
<dbReference type="PANTHER" id="PTHR44196:SF1">
    <property type="entry name" value="DEHYDROGENASE_REDUCTASE SDR FAMILY MEMBER 7B"/>
    <property type="match status" value="1"/>
</dbReference>
<dbReference type="Pfam" id="PF00106">
    <property type="entry name" value="adh_short"/>
    <property type="match status" value="1"/>
</dbReference>
<dbReference type="PRINTS" id="PR00081">
    <property type="entry name" value="GDHRDH"/>
</dbReference>
<dbReference type="PRINTS" id="PR00080">
    <property type="entry name" value="SDRFAMILY"/>
</dbReference>
<dbReference type="SMART" id="SM00822">
    <property type="entry name" value="PKS_KR"/>
    <property type="match status" value="1"/>
</dbReference>
<dbReference type="SUPFAM" id="SSF51735">
    <property type="entry name" value="NAD(P)-binding Rossmann-fold domains"/>
    <property type="match status" value="1"/>
</dbReference>
<sequence>MTATYMNSSVPFMYDSYPAVAPERFQGQLQGKTAIVTGGSSGIGRAVCKAFASAGASVACIARREPRLKTLVDEIKAEGGKAIPLAVDISEKDAAKKIVSQVEAELGPVDILVNVAGIARLGPLVDEPEDLDIWWKVHEVNVRAPALLTRAVLPSMIERKSGAVISVSSVVATWPSPIQTAYASSKAAISKFHESLAAELEGTGVLSFALNPGSVESELGAPDDAINTASQHPMLEKMRQMLKSPRKKQTAQLPADVCVALVCDPRCKVLNGRHVEAAQDLSPVLEEAEKEGGGRIGKDRLYLVNIGIL</sequence>
<evidence type="ECO:0000250" key="1">
    <source>
        <dbReference type="UniProtKB" id="L0E2Z4"/>
    </source>
</evidence>
<evidence type="ECO:0000250" key="2">
    <source>
        <dbReference type="UniProtKB" id="O93868"/>
    </source>
</evidence>
<evidence type="ECO:0000255" key="3">
    <source>
        <dbReference type="PROSITE-ProRule" id="PRU10001"/>
    </source>
</evidence>
<evidence type="ECO:0000269" key="4">
    <source>
    </source>
</evidence>
<evidence type="ECO:0000269" key="5">
    <source>
    </source>
</evidence>
<evidence type="ECO:0000303" key="6">
    <source>
    </source>
</evidence>
<evidence type="ECO:0000305" key="7"/>
<evidence type="ECO:0000305" key="8">
    <source>
    </source>
</evidence>
<reference key="1">
    <citation type="journal article" date="2012" name="PLoS Pathog.">
        <title>Diverse lifestyles and strategies of plant pathogenesis encoded in the genomes of eighteen Dothideomycetes fungi.</title>
        <authorList>
            <person name="Ohm R.A."/>
            <person name="Feau N."/>
            <person name="Henrissat B."/>
            <person name="Schoch C.L."/>
            <person name="Horwitz B.A."/>
            <person name="Barry K.W."/>
            <person name="Condon B.J."/>
            <person name="Copeland A.C."/>
            <person name="Dhillon B."/>
            <person name="Glaser F."/>
            <person name="Hesse C.N."/>
            <person name="Kosti I."/>
            <person name="LaButti K."/>
            <person name="Lindquist E.A."/>
            <person name="Lucas S."/>
            <person name="Salamov A.A."/>
            <person name="Bradshaw R.E."/>
            <person name="Ciuffetti L."/>
            <person name="Hamelin R.C."/>
            <person name="Kema G.H.J."/>
            <person name="Lawrence C."/>
            <person name="Scott J.A."/>
            <person name="Spatafora J.W."/>
            <person name="Turgeon B.G."/>
            <person name="de Wit P.J.G.M."/>
            <person name="Zhong S."/>
            <person name="Goodwin S.B."/>
            <person name="Grigoriev I.V."/>
        </authorList>
    </citation>
    <scope>NUCLEOTIDE SEQUENCE [LARGE SCALE GENOMIC DNA]</scope>
    <source>
        <strain>CIRAD86</strain>
    </source>
</reference>
<reference key="2">
    <citation type="journal article" date="2016" name="PLoS ONE">
        <title>Bioinformatics prediction of polyketide synthase gene clusters from Mycosphaerella fijiensis.</title>
        <authorList>
            <person name="Noar R.D."/>
            <person name="Daub M.E."/>
        </authorList>
    </citation>
    <scope>IDENTIFICATION</scope>
    <scope>FUNCTION</scope>
</reference>
<reference key="3">
    <citation type="journal article" date="2019" name="PLoS ONE">
        <title>A novel polyketide synthase gene cluster in the plant pathogenic fungus Pseudocercospora fijiensis.</title>
        <authorList>
            <person name="Noar R.D."/>
            <person name="Thomas E."/>
            <person name="Daub M.E."/>
        </authorList>
    </citation>
    <scope>FUNCTION</scope>
    <scope>PATHWAY</scope>
</reference>
<accession>M2ZIX7</accession>
<name>PK81I_PSEFD</name>